<protein>
    <recommendedName>
        <fullName evidence="1">Histidine ammonia-lyase</fullName>
        <shortName evidence="1">Histidase</shortName>
        <ecNumber evidence="1">4.3.1.3</ecNumber>
    </recommendedName>
</protein>
<comment type="catalytic activity">
    <reaction evidence="1">
        <text>L-histidine = trans-urocanate + NH4(+)</text>
        <dbReference type="Rhea" id="RHEA:21232"/>
        <dbReference type="ChEBI" id="CHEBI:17771"/>
        <dbReference type="ChEBI" id="CHEBI:28938"/>
        <dbReference type="ChEBI" id="CHEBI:57595"/>
        <dbReference type="EC" id="4.3.1.3"/>
    </reaction>
</comment>
<comment type="pathway">
    <text evidence="1">Amino-acid degradation; L-histidine degradation into L-glutamate; N-formimidoyl-L-glutamate from L-histidine: step 1/3.</text>
</comment>
<comment type="subcellular location">
    <subcellularLocation>
        <location evidence="1">Cytoplasm</location>
    </subcellularLocation>
</comment>
<comment type="PTM">
    <text evidence="1">Contains an active site 4-methylidene-imidazol-5-one (MIO), which is formed autocatalytically by cyclization and dehydration of residues Ala-Ser-Gly.</text>
</comment>
<comment type="similarity">
    <text evidence="1">Belongs to the PAL/histidase family.</text>
</comment>
<reference key="1">
    <citation type="journal article" date="2008" name="Chem. Biol. Interact.">
        <title>Extending the Bacillus cereus group genomics to putative food-borne pathogens of different toxicity.</title>
        <authorList>
            <person name="Lapidus A."/>
            <person name="Goltsman E."/>
            <person name="Auger S."/>
            <person name="Galleron N."/>
            <person name="Segurens B."/>
            <person name="Dossat C."/>
            <person name="Land M.L."/>
            <person name="Broussolle V."/>
            <person name="Brillard J."/>
            <person name="Guinebretiere M.-H."/>
            <person name="Sanchis V."/>
            <person name="Nguen-the C."/>
            <person name="Lereclus D."/>
            <person name="Richardson P."/>
            <person name="Wincker P."/>
            <person name="Weissenbach J."/>
            <person name="Ehrlich S.D."/>
            <person name="Sorokin A."/>
        </authorList>
    </citation>
    <scope>NUCLEOTIDE SEQUENCE [LARGE SCALE GENOMIC DNA]</scope>
    <source>
        <strain>KBAB4</strain>
    </source>
</reference>
<dbReference type="EC" id="4.3.1.3" evidence="1"/>
<dbReference type="EMBL" id="CP000903">
    <property type="protein sequence ID" value="ABY44514.1"/>
    <property type="molecule type" value="Genomic_DNA"/>
</dbReference>
<dbReference type="RefSeq" id="WP_002033511.1">
    <property type="nucleotide sequence ID" value="NC_010184.1"/>
</dbReference>
<dbReference type="SMR" id="A9VPT8"/>
<dbReference type="KEGG" id="bwe:BcerKBAB4_3339"/>
<dbReference type="eggNOG" id="COG2986">
    <property type="taxonomic scope" value="Bacteria"/>
</dbReference>
<dbReference type="HOGENOM" id="CLU_014801_4_0_9"/>
<dbReference type="UniPathway" id="UPA00379">
    <property type="reaction ID" value="UER00549"/>
</dbReference>
<dbReference type="Proteomes" id="UP000002154">
    <property type="component" value="Chromosome"/>
</dbReference>
<dbReference type="GO" id="GO:0005737">
    <property type="term" value="C:cytoplasm"/>
    <property type="evidence" value="ECO:0007669"/>
    <property type="project" value="UniProtKB-SubCell"/>
</dbReference>
<dbReference type="GO" id="GO:0004397">
    <property type="term" value="F:histidine ammonia-lyase activity"/>
    <property type="evidence" value="ECO:0007669"/>
    <property type="project" value="UniProtKB-UniRule"/>
</dbReference>
<dbReference type="GO" id="GO:0019556">
    <property type="term" value="P:L-histidine catabolic process to glutamate and formamide"/>
    <property type="evidence" value="ECO:0007669"/>
    <property type="project" value="UniProtKB-UniPathway"/>
</dbReference>
<dbReference type="GO" id="GO:0019557">
    <property type="term" value="P:L-histidine catabolic process to glutamate and formate"/>
    <property type="evidence" value="ECO:0007669"/>
    <property type="project" value="UniProtKB-UniPathway"/>
</dbReference>
<dbReference type="CDD" id="cd00332">
    <property type="entry name" value="PAL-HAL"/>
    <property type="match status" value="1"/>
</dbReference>
<dbReference type="FunFam" id="1.10.275.10:FF:000008">
    <property type="entry name" value="Histidine ammonia-lyase"/>
    <property type="match status" value="1"/>
</dbReference>
<dbReference type="FunFam" id="1.20.200.10:FF:000003">
    <property type="entry name" value="Histidine ammonia-lyase"/>
    <property type="match status" value="1"/>
</dbReference>
<dbReference type="Gene3D" id="1.20.200.10">
    <property type="entry name" value="Fumarase/aspartase (Central domain)"/>
    <property type="match status" value="1"/>
</dbReference>
<dbReference type="Gene3D" id="1.10.275.10">
    <property type="entry name" value="Fumarase/aspartase (N-terminal domain)"/>
    <property type="match status" value="1"/>
</dbReference>
<dbReference type="HAMAP" id="MF_00229">
    <property type="entry name" value="His_ammonia_lyase"/>
    <property type="match status" value="1"/>
</dbReference>
<dbReference type="InterPro" id="IPR001106">
    <property type="entry name" value="Aromatic_Lyase"/>
</dbReference>
<dbReference type="InterPro" id="IPR024083">
    <property type="entry name" value="Fumarase/histidase_N"/>
</dbReference>
<dbReference type="InterPro" id="IPR005921">
    <property type="entry name" value="HutH"/>
</dbReference>
<dbReference type="InterPro" id="IPR008948">
    <property type="entry name" value="L-Aspartase-like"/>
</dbReference>
<dbReference type="InterPro" id="IPR022313">
    <property type="entry name" value="Phe/His_NH3-lyase_AS"/>
</dbReference>
<dbReference type="NCBIfam" id="TIGR01225">
    <property type="entry name" value="hutH"/>
    <property type="match status" value="1"/>
</dbReference>
<dbReference type="NCBIfam" id="NF006871">
    <property type="entry name" value="PRK09367.1"/>
    <property type="match status" value="1"/>
</dbReference>
<dbReference type="PANTHER" id="PTHR10362">
    <property type="entry name" value="HISTIDINE AMMONIA-LYASE"/>
    <property type="match status" value="1"/>
</dbReference>
<dbReference type="Pfam" id="PF00221">
    <property type="entry name" value="Lyase_aromatic"/>
    <property type="match status" value="1"/>
</dbReference>
<dbReference type="SUPFAM" id="SSF48557">
    <property type="entry name" value="L-aspartase-like"/>
    <property type="match status" value="1"/>
</dbReference>
<dbReference type="PROSITE" id="PS00488">
    <property type="entry name" value="PAL_HISTIDASE"/>
    <property type="match status" value="1"/>
</dbReference>
<name>HUTH_BACMK</name>
<sequence>MITLTGHTLTVEEMKRLLLEGEGVTACPTSMQKVAECREVVEKIVEDGKVVYGITTGFGKFSDVLIQKDDVKALQHNLIQSHACGIGDPFPEEVSRGMLILRANTMLKGVSGVRPLVVNMLLEFVNRKIHPVVPQQGSLGASGDLAPLSHLALVLLGEGEVFYKGKRVHAMVALTEEGLEPIELEAKEGLALINGTQAMTAQGVLSYIEAEASAYQSELIASMTMEGLRGIIDAFDENVHKARGYKEQVEVASRIRDILHDSKLVTKQGELRVQDAYSLRCIPQVHGASWQVLNYVKEKLEIEMNAATDNPLIFDGGEKVISGGNFHGQPIAFAMDFLKVGMAELANISERRIERLVNPQLNDLPPFLSPEPGLQSGAMIMQYAAASLVSENKTLAHPASVDSIPSSANQEDHVSMGTIASRHAHQIIQNARRVLAIEMICAMQAAEYRGIENMSTVTKTFYHQGRQQVPSITNDRIFSTDIENIAHWLKTNYSIKERLDVNAAL</sequence>
<proteinExistence type="inferred from homology"/>
<accession>A9VPT8</accession>
<organism>
    <name type="scientific">Bacillus mycoides (strain KBAB4)</name>
    <name type="common">Bacillus weihenstephanensis</name>
    <dbReference type="NCBI Taxonomy" id="315730"/>
    <lineage>
        <taxon>Bacteria</taxon>
        <taxon>Bacillati</taxon>
        <taxon>Bacillota</taxon>
        <taxon>Bacilli</taxon>
        <taxon>Bacillales</taxon>
        <taxon>Bacillaceae</taxon>
        <taxon>Bacillus</taxon>
        <taxon>Bacillus cereus group</taxon>
    </lineage>
</organism>
<gene>
    <name evidence="1" type="primary">hutH</name>
    <name type="ordered locus">BcerKBAB4_3339</name>
</gene>
<keyword id="KW-0963">Cytoplasm</keyword>
<keyword id="KW-0369">Histidine metabolism</keyword>
<keyword id="KW-0456">Lyase</keyword>
<feature type="chain" id="PRO_1000100433" description="Histidine ammonia-lyase">
    <location>
        <begin position="1"/>
        <end position="505"/>
    </location>
</feature>
<feature type="modified residue" description="2,3-didehydroalanine (Ser)" evidence="1">
    <location>
        <position position="142"/>
    </location>
</feature>
<feature type="cross-link" description="5-imidazolinone (Ala-Gly)" evidence="1">
    <location>
        <begin position="141"/>
        <end position="143"/>
    </location>
</feature>
<evidence type="ECO:0000255" key="1">
    <source>
        <dbReference type="HAMAP-Rule" id="MF_00229"/>
    </source>
</evidence>